<sequence length="986" mass="110863">MAPLKVHGPVRMRSMQTGITKWKEGSFEIVEKDNKVSLVVHYNVGGIPKTFQLSHNIKSVTLRPNGRKLCCLMLTLKDTSFLTIDKVPLKDANEMRMYLDAVHQDRVHTAGKPSQGSGSFGGVLGSRTTQKEANRQFSYIENQAPPKRVTVESKDETPFRKVLGTPARASVKNSSGTGAPSNRVNVAASPTSSVPHRTGLLESRSEKRKRAQPPSSEMSEDYPKENDSSTNNTAMSDPAWKYLNSSREKQLKLKQEEENRTSGVLPLQSSSYYGSRSSSKEYSTSSSTLDRSSVSSQTTSAKRSLGFLSQPAPLSVKKMRSNQDYTGWNKPRVPLSTHPQQQLQGFSNLGNTCYMNAILQSLFSIQSFANDLLKQGIPWKKIPLNALIRRFAHLLAKKDVSSPEVKKELLKKVKSAISATAERFSGYMQNDAHEFLSQCLDQLKEDMEKLNKTWKSEPVPNDDSSPGRASDDLSATKVYTCPVISNLEFEVQHSIICKTCGETVTKREQFNDLSIDLPRRKKLFPSRSIQDSLDLFFRAEEIEYSCEKCNGKSAVVTHKFNRLPRVLILHLKRYSFNVALSLNHKVGQQVVIPRYLTLLSHCTESTRLPLTLGWSAHSAISRPLKASQMVNSCTISTSTPCRKGRFLRKEGLSELRSSTGRKNLNRVHVFKEDVQDINSSLQVQRGIRKSSKRSKMEGDKPELGNAGFDGMSEDELLAAVLEISKREASLSLSHDEDKPTSSPDTGFGDDEIQELPENLETMETEKPKAPLESGPANFTEITKDFDENKENKTPEGSQGEVDWLQQYDMEREREEQELQQALAQSLQEQEAREQKEDDDLKRATELSLQEFNSSLLDSVGSDEDSGNEDVLDMEYSEAEAEELKRNAETGELPHSYRLISIVSHIGSTSSSGHYISDVYDIKKQSWFTYNDLEVSRTLETTVQCDRDRSGYIFFYMHKDIFDELLETEKNAQPLSMEVGRSIRQPL</sequence>
<comment type="function">
    <text evidence="1">Deubiquitinase that antagonizes the anaphase-promoting complex (APC/C) during G1/S transition by mediating deubiquitination of APC/C target proteins, thereby promoting S phase entry. Specifically mediates deubiquitination of 'Lys-11'-linked polyubiquitin chains, a specific ubiquitin-linkage type mediated by the APC/C complex (By similarity).</text>
</comment>
<comment type="catalytic activity">
    <reaction>
        <text>Thiol-dependent hydrolysis of ester, thioester, amide, peptide and isopeptide bonds formed by the C-terminal Gly of ubiquitin (a 76-residue protein attached to proteins as an intracellular targeting signal).</text>
        <dbReference type="EC" id="3.4.19.12"/>
    </reaction>
</comment>
<comment type="similarity">
    <text evidence="6">Belongs to the peptidase C19 family.</text>
</comment>
<reference key="1">
    <citation type="journal article" date="2004" name="Nature">
        <title>Sequence and comparative analysis of the chicken genome provide unique perspectives on vertebrate evolution.</title>
        <authorList>
            <person name="Hillier L.W."/>
            <person name="Miller W."/>
            <person name="Birney E."/>
            <person name="Warren W."/>
            <person name="Hardison R.C."/>
            <person name="Ponting C.P."/>
            <person name="Bork P."/>
            <person name="Burt D.W."/>
            <person name="Groenen M.A.M."/>
            <person name="Delany M.E."/>
            <person name="Dodgson J.B."/>
            <person name="Chinwalla A.T."/>
            <person name="Cliften P.F."/>
            <person name="Clifton S.W."/>
            <person name="Delehaunty K.D."/>
            <person name="Fronick C."/>
            <person name="Fulton R.S."/>
            <person name="Graves T.A."/>
            <person name="Kremitzki C."/>
            <person name="Layman D."/>
            <person name="Magrini V."/>
            <person name="McPherson J.D."/>
            <person name="Miner T.L."/>
            <person name="Minx P."/>
            <person name="Nash W.E."/>
            <person name="Nhan M.N."/>
            <person name="Nelson J.O."/>
            <person name="Oddy L.G."/>
            <person name="Pohl C.S."/>
            <person name="Randall-Maher J."/>
            <person name="Smith S.M."/>
            <person name="Wallis J.W."/>
            <person name="Yang S.-P."/>
            <person name="Romanov M.N."/>
            <person name="Rondelli C.M."/>
            <person name="Paton B."/>
            <person name="Smith J."/>
            <person name="Morrice D."/>
            <person name="Daniels L."/>
            <person name="Tempest H.G."/>
            <person name="Robertson L."/>
            <person name="Masabanda J.S."/>
            <person name="Griffin D.K."/>
            <person name="Vignal A."/>
            <person name="Fillon V."/>
            <person name="Jacobbson L."/>
            <person name="Kerje S."/>
            <person name="Andersson L."/>
            <person name="Crooijmans R.P."/>
            <person name="Aerts J."/>
            <person name="van der Poel J.J."/>
            <person name="Ellegren H."/>
            <person name="Caldwell R.B."/>
            <person name="Hubbard S.J."/>
            <person name="Grafham D.V."/>
            <person name="Kierzek A.M."/>
            <person name="McLaren S.R."/>
            <person name="Overton I.M."/>
            <person name="Arakawa H."/>
            <person name="Beattie K.J."/>
            <person name="Bezzubov Y."/>
            <person name="Boardman P.E."/>
            <person name="Bonfield J.K."/>
            <person name="Croning M.D.R."/>
            <person name="Davies R.M."/>
            <person name="Francis M.D."/>
            <person name="Humphray S.J."/>
            <person name="Scott C.E."/>
            <person name="Taylor R.G."/>
            <person name="Tickle C."/>
            <person name="Brown W.R.A."/>
            <person name="Rogers J."/>
            <person name="Buerstedde J.-M."/>
            <person name="Wilson S.A."/>
            <person name="Stubbs L."/>
            <person name="Ovcharenko I."/>
            <person name="Gordon L."/>
            <person name="Lucas S."/>
            <person name="Miller M.M."/>
            <person name="Inoko H."/>
            <person name="Shiina T."/>
            <person name="Kaufman J."/>
            <person name="Salomonsen J."/>
            <person name="Skjoedt K."/>
            <person name="Wong G.K.-S."/>
            <person name="Wang J."/>
            <person name="Liu B."/>
            <person name="Wang J."/>
            <person name="Yu J."/>
            <person name="Yang H."/>
            <person name="Nefedov M."/>
            <person name="Koriabine M."/>
            <person name="Dejong P.J."/>
            <person name="Goodstadt L."/>
            <person name="Webber C."/>
            <person name="Dickens N.J."/>
            <person name="Letunic I."/>
            <person name="Suyama M."/>
            <person name="Torrents D."/>
            <person name="von Mering C."/>
            <person name="Zdobnov E.M."/>
            <person name="Makova K."/>
            <person name="Nekrutenko A."/>
            <person name="Elnitski L."/>
            <person name="Eswara P."/>
            <person name="King D.C."/>
            <person name="Yang S.-P."/>
            <person name="Tyekucheva S."/>
            <person name="Radakrishnan A."/>
            <person name="Harris R.S."/>
            <person name="Chiaromonte F."/>
            <person name="Taylor J."/>
            <person name="He J."/>
            <person name="Rijnkels M."/>
            <person name="Griffiths-Jones S."/>
            <person name="Ureta-Vidal A."/>
            <person name="Hoffman M.M."/>
            <person name="Severin J."/>
            <person name="Searle S.M.J."/>
            <person name="Law A.S."/>
            <person name="Speed D."/>
            <person name="Waddington D."/>
            <person name="Cheng Z."/>
            <person name="Tuzun E."/>
            <person name="Eichler E."/>
            <person name="Bao Z."/>
            <person name="Flicek P."/>
            <person name="Shteynberg D.D."/>
            <person name="Brent M.R."/>
            <person name="Bye J.M."/>
            <person name="Huckle E.J."/>
            <person name="Chatterji S."/>
            <person name="Dewey C."/>
            <person name="Pachter L."/>
            <person name="Kouranov A."/>
            <person name="Mourelatos Z."/>
            <person name="Hatzigeorgiou A.G."/>
            <person name="Paterson A.H."/>
            <person name="Ivarie R."/>
            <person name="Brandstrom M."/>
            <person name="Axelsson E."/>
            <person name="Backstrom N."/>
            <person name="Berlin S."/>
            <person name="Webster M.T."/>
            <person name="Pourquie O."/>
            <person name="Reymond A."/>
            <person name="Ucla C."/>
            <person name="Antonarakis S.E."/>
            <person name="Long M."/>
            <person name="Emerson J.J."/>
            <person name="Betran E."/>
            <person name="Dupanloup I."/>
            <person name="Kaessmann H."/>
            <person name="Hinrichs A.S."/>
            <person name="Bejerano G."/>
            <person name="Furey T.S."/>
            <person name="Harte R.A."/>
            <person name="Raney B."/>
            <person name="Siepel A."/>
            <person name="Kent W.J."/>
            <person name="Haussler D."/>
            <person name="Eyras E."/>
            <person name="Castelo R."/>
            <person name="Abril J.F."/>
            <person name="Castellano S."/>
            <person name="Camara F."/>
            <person name="Parra G."/>
            <person name="Guigo R."/>
            <person name="Bourque G."/>
            <person name="Tesler G."/>
            <person name="Pevzner P.A."/>
            <person name="Smit A."/>
            <person name="Fulton L.A."/>
            <person name="Mardis E.R."/>
            <person name="Wilson R.K."/>
        </authorList>
    </citation>
    <scope>NUCLEOTIDE SEQUENCE [LARGE SCALE GENOMIC DNA]</scope>
</reference>
<feature type="chain" id="PRO_0000412647" description="Ubiquitin carboxyl-terminal hydrolase 37">
    <location>
        <begin position="1"/>
        <end position="986"/>
    </location>
</feature>
<feature type="domain" description="USP">
    <location>
        <begin position="344"/>
        <end position="958"/>
    </location>
</feature>
<feature type="domain" description="UIM 1" evidence="2">
    <location>
        <begin position="712"/>
        <end position="731"/>
    </location>
</feature>
<feature type="domain" description="UIM 2" evidence="2">
    <location>
        <begin position="813"/>
        <end position="832"/>
    </location>
</feature>
<feature type="domain" description="UIM 3" evidence="2">
    <location>
        <begin position="835"/>
        <end position="854"/>
    </location>
</feature>
<feature type="region of interest" description="Disordered" evidence="5">
    <location>
        <begin position="134"/>
        <end position="238"/>
    </location>
</feature>
<feature type="region of interest" description="Disordered" evidence="5">
    <location>
        <begin position="251"/>
        <end position="305"/>
    </location>
</feature>
<feature type="region of interest" description="Disordered" evidence="5">
    <location>
        <begin position="683"/>
        <end position="710"/>
    </location>
</feature>
<feature type="region of interest" description="Disordered" evidence="5">
    <location>
        <begin position="729"/>
        <end position="751"/>
    </location>
</feature>
<feature type="region of interest" description="Disordered" evidence="5">
    <location>
        <begin position="811"/>
        <end position="840"/>
    </location>
</feature>
<feature type="short sequence motif" description="KEN box 1" evidence="1">
    <location>
        <begin position="32"/>
        <end position="34"/>
    </location>
</feature>
<feature type="short sequence motif" description="D-box 1" evidence="1">
    <location>
        <begin position="71"/>
        <end position="79"/>
    </location>
</feature>
<feature type="short sequence motif" description="D-box 2" evidence="1">
    <location>
        <begin position="96"/>
        <end position="105"/>
    </location>
</feature>
<feature type="short sequence motif" description="D-box 3" evidence="1">
    <location>
        <begin position="160"/>
        <end position="168"/>
    </location>
</feature>
<feature type="short sequence motif" description="KEN box 2" evidence="1">
    <location>
        <begin position="224"/>
        <end position="226"/>
    </location>
</feature>
<feature type="short sequence motif" description="KEN box 3" evidence="1">
    <location>
        <begin position="789"/>
        <end position="791"/>
    </location>
</feature>
<feature type="compositionally biased region" description="Basic and acidic residues" evidence="5">
    <location>
        <begin position="149"/>
        <end position="159"/>
    </location>
</feature>
<feature type="compositionally biased region" description="Polar residues" evidence="5">
    <location>
        <begin position="171"/>
        <end position="195"/>
    </location>
</feature>
<feature type="compositionally biased region" description="Basic and acidic residues" evidence="5">
    <location>
        <begin position="251"/>
        <end position="260"/>
    </location>
</feature>
<feature type="compositionally biased region" description="Low complexity" evidence="5">
    <location>
        <begin position="269"/>
        <end position="298"/>
    </location>
</feature>
<feature type="compositionally biased region" description="Basic and acidic residues" evidence="5">
    <location>
        <begin position="729"/>
        <end position="739"/>
    </location>
</feature>
<feature type="compositionally biased region" description="Low complexity" evidence="5">
    <location>
        <begin position="818"/>
        <end position="828"/>
    </location>
</feature>
<feature type="compositionally biased region" description="Basic and acidic residues" evidence="5">
    <location>
        <begin position="829"/>
        <end position="840"/>
    </location>
</feature>
<feature type="active site" description="Nucleophile" evidence="3 4">
    <location>
        <position position="353"/>
    </location>
</feature>
<feature type="active site" description="Proton acceptor" evidence="3 4">
    <location>
        <position position="913"/>
    </location>
</feature>
<proteinExistence type="inferred from homology"/>
<organism>
    <name type="scientific">Gallus gallus</name>
    <name type="common">Chicken</name>
    <dbReference type="NCBI Taxonomy" id="9031"/>
    <lineage>
        <taxon>Eukaryota</taxon>
        <taxon>Metazoa</taxon>
        <taxon>Chordata</taxon>
        <taxon>Craniata</taxon>
        <taxon>Vertebrata</taxon>
        <taxon>Euteleostomi</taxon>
        <taxon>Archelosauria</taxon>
        <taxon>Archosauria</taxon>
        <taxon>Dinosauria</taxon>
        <taxon>Saurischia</taxon>
        <taxon>Theropoda</taxon>
        <taxon>Coelurosauria</taxon>
        <taxon>Aves</taxon>
        <taxon>Neognathae</taxon>
        <taxon>Galloanserae</taxon>
        <taxon>Galliformes</taxon>
        <taxon>Phasianidae</taxon>
        <taxon>Phasianinae</taxon>
        <taxon>Gallus</taxon>
    </lineage>
</organism>
<dbReference type="EC" id="3.4.19.12"/>
<dbReference type="EMBL" id="AADN02016788">
    <property type="status" value="NOT_ANNOTATED_CDS"/>
    <property type="molecule type" value="Genomic_DNA"/>
</dbReference>
<dbReference type="EMBL" id="AADN02016789">
    <property type="status" value="NOT_ANNOTATED_CDS"/>
    <property type="molecule type" value="Genomic_DNA"/>
</dbReference>
<dbReference type="SMR" id="E1C213"/>
<dbReference type="FunCoup" id="E1C213">
    <property type="interactions" value="1563"/>
</dbReference>
<dbReference type="STRING" id="9031.ENSGALP00000037410"/>
<dbReference type="GlyGen" id="E1C213">
    <property type="glycosylation" value="1 site"/>
</dbReference>
<dbReference type="PaxDb" id="9031-ENSGALP00000037410"/>
<dbReference type="VEuPathDB" id="HostDB:geneid_424216"/>
<dbReference type="eggNOG" id="KOG1868">
    <property type="taxonomic scope" value="Eukaryota"/>
</dbReference>
<dbReference type="InParanoid" id="E1C213"/>
<dbReference type="OrthoDB" id="289038at2759"/>
<dbReference type="PhylomeDB" id="E1C213"/>
<dbReference type="Proteomes" id="UP000000539">
    <property type="component" value="Unassembled WGS sequence"/>
</dbReference>
<dbReference type="GO" id="GO:0005829">
    <property type="term" value="C:cytosol"/>
    <property type="evidence" value="ECO:0000318"/>
    <property type="project" value="GO_Central"/>
</dbReference>
<dbReference type="GO" id="GO:0005634">
    <property type="term" value="C:nucleus"/>
    <property type="evidence" value="ECO:0000318"/>
    <property type="project" value="GO_Central"/>
</dbReference>
<dbReference type="GO" id="GO:0004843">
    <property type="term" value="F:cysteine-type deubiquitinase activity"/>
    <property type="evidence" value="ECO:0000250"/>
    <property type="project" value="UniProtKB"/>
</dbReference>
<dbReference type="GO" id="GO:0004197">
    <property type="term" value="F:cysteine-type endopeptidase activity"/>
    <property type="evidence" value="ECO:0000250"/>
    <property type="project" value="UniProtKB"/>
</dbReference>
<dbReference type="GO" id="GO:0051301">
    <property type="term" value="P:cell division"/>
    <property type="evidence" value="ECO:0007669"/>
    <property type="project" value="UniProtKB-KW"/>
</dbReference>
<dbReference type="GO" id="GO:0000082">
    <property type="term" value="P:G1/S transition of mitotic cell cycle"/>
    <property type="evidence" value="ECO:0000250"/>
    <property type="project" value="UniProtKB"/>
</dbReference>
<dbReference type="GO" id="GO:0035871">
    <property type="term" value="P:protein K11-linked deubiquitination"/>
    <property type="evidence" value="ECO:0000250"/>
    <property type="project" value="UniProtKB"/>
</dbReference>
<dbReference type="GO" id="GO:0071108">
    <property type="term" value="P:protein K48-linked deubiquitination"/>
    <property type="evidence" value="ECO:0000250"/>
    <property type="project" value="UniProtKB"/>
</dbReference>
<dbReference type="GO" id="GO:0006508">
    <property type="term" value="P:proteolysis"/>
    <property type="evidence" value="ECO:0007669"/>
    <property type="project" value="UniProtKB-KW"/>
</dbReference>
<dbReference type="GO" id="GO:0031647">
    <property type="term" value="P:regulation of protein stability"/>
    <property type="evidence" value="ECO:0000318"/>
    <property type="project" value="GO_Central"/>
</dbReference>
<dbReference type="CDD" id="cd02257">
    <property type="entry name" value="Peptidase_C19"/>
    <property type="match status" value="2"/>
</dbReference>
<dbReference type="CDD" id="cd13312">
    <property type="entry name" value="PH_USP37_like"/>
    <property type="match status" value="1"/>
</dbReference>
<dbReference type="FunFam" id="2.30.29.180:FF:000001">
    <property type="entry name" value="Ubiquitin carboxyl-terminal hydrolase 37"/>
    <property type="match status" value="1"/>
</dbReference>
<dbReference type="FunFam" id="3.90.70.10:FF:000040">
    <property type="entry name" value="Ubiquitin carboxyl-terminal hydrolase 37"/>
    <property type="match status" value="1"/>
</dbReference>
<dbReference type="FunFam" id="3.90.70.10:FF:000066">
    <property type="entry name" value="Ubiquitin carboxyl-terminal hydrolase 37"/>
    <property type="match status" value="1"/>
</dbReference>
<dbReference type="Gene3D" id="3.90.70.10">
    <property type="entry name" value="Cysteine proteinases"/>
    <property type="match status" value="2"/>
</dbReference>
<dbReference type="Gene3D" id="2.30.29.180">
    <property type="entry name" value="Ubiquitin carboxyl-terminal hydrolase 26/29/37, pleckstrin homology-like domain"/>
    <property type="match status" value="1"/>
</dbReference>
<dbReference type="InterPro" id="IPR038765">
    <property type="entry name" value="Papain-like_cys_pep_sf"/>
</dbReference>
<dbReference type="InterPro" id="IPR050164">
    <property type="entry name" value="Peptidase_C19"/>
</dbReference>
<dbReference type="InterPro" id="IPR001394">
    <property type="entry name" value="Peptidase_C19_UCH"/>
</dbReference>
<dbReference type="InterPro" id="IPR003903">
    <property type="entry name" value="UIM_dom"/>
</dbReference>
<dbReference type="InterPro" id="IPR032069">
    <property type="entry name" value="USP37-like_PH"/>
</dbReference>
<dbReference type="InterPro" id="IPR038093">
    <property type="entry name" value="USP37-like_PH_sf"/>
</dbReference>
<dbReference type="InterPro" id="IPR018200">
    <property type="entry name" value="USP_CS"/>
</dbReference>
<dbReference type="InterPro" id="IPR028889">
    <property type="entry name" value="USP_dom"/>
</dbReference>
<dbReference type="PANTHER" id="PTHR24006">
    <property type="entry name" value="UBIQUITIN CARBOXYL-TERMINAL HYDROLASE"/>
    <property type="match status" value="1"/>
</dbReference>
<dbReference type="PANTHER" id="PTHR24006:SF915">
    <property type="entry name" value="UBIQUITIN CARBOXYL-TERMINAL HYDROLASE-RELATED"/>
    <property type="match status" value="1"/>
</dbReference>
<dbReference type="Pfam" id="PF00443">
    <property type="entry name" value="UCH"/>
    <property type="match status" value="1"/>
</dbReference>
<dbReference type="Pfam" id="PF16674">
    <property type="entry name" value="UCH_N"/>
    <property type="match status" value="1"/>
</dbReference>
<dbReference type="Pfam" id="PF02809">
    <property type="entry name" value="UIM"/>
    <property type="match status" value="3"/>
</dbReference>
<dbReference type="SMART" id="SM00726">
    <property type="entry name" value="UIM"/>
    <property type="match status" value="3"/>
</dbReference>
<dbReference type="SUPFAM" id="SSF54001">
    <property type="entry name" value="Cysteine proteinases"/>
    <property type="match status" value="1"/>
</dbReference>
<dbReference type="PROSITE" id="PS50330">
    <property type="entry name" value="UIM"/>
    <property type="match status" value="3"/>
</dbReference>
<dbReference type="PROSITE" id="PS00972">
    <property type="entry name" value="USP_1"/>
    <property type="match status" value="1"/>
</dbReference>
<dbReference type="PROSITE" id="PS00973">
    <property type="entry name" value="USP_2"/>
    <property type="match status" value="1"/>
</dbReference>
<dbReference type="PROSITE" id="PS50235">
    <property type="entry name" value="USP_3"/>
    <property type="match status" value="1"/>
</dbReference>
<keyword id="KW-0131">Cell cycle</keyword>
<keyword id="KW-0132">Cell division</keyword>
<keyword id="KW-0378">Hydrolase</keyword>
<keyword id="KW-0498">Mitosis</keyword>
<keyword id="KW-0645">Protease</keyword>
<keyword id="KW-1185">Reference proteome</keyword>
<keyword id="KW-0677">Repeat</keyword>
<keyword id="KW-0788">Thiol protease</keyword>
<keyword id="KW-0833">Ubl conjugation pathway</keyword>
<accession>E1C213</accession>
<accession>E1BU11</accession>
<gene>
    <name type="primary">USP37</name>
</gene>
<evidence type="ECO:0000250" key="1"/>
<evidence type="ECO:0000255" key="2">
    <source>
        <dbReference type="PROSITE-ProRule" id="PRU00213"/>
    </source>
</evidence>
<evidence type="ECO:0000255" key="3">
    <source>
        <dbReference type="PROSITE-ProRule" id="PRU10092"/>
    </source>
</evidence>
<evidence type="ECO:0000255" key="4">
    <source>
        <dbReference type="PROSITE-ProRule" id="PRU10093"/>
    </source>
</evidence>
<evidence type="ECO:0000256" key="5">
    <source>
        <dbReference type="SAM" id="MobiDB-lite"/>
    </source>
</evidence>
<evidence type="ECO:0000305" key="6"/>
<name>UBP37_CHICK</name>
<protein>
    <recommendedName>
        <fullName>Ubiquitin carboxyl-terminal hydrolase 37</fullName>
        <ecNumber>3.4.19.12</ecNumber>
    </recommendedName>
    <alternativeName>
        <fullName>Deubiquitinating enzyme 37</fullName>
    </alternativeName>
    <alternativeName>
        <fullName>Ubiquitin thioesterase 37</fullName>
    </alternativeName>
    <alternativeName>
        <fullName>Ubiquitin-specific-processing protease 37</fullName>
    </alternativeName>
</protein>